<evidence type="ECO:0000250" key="1"/>
<evidence type="ECO:0000250" key="2">
    <source>
        <dbReference type="UniProtKB" id="Q9NZJ0"/>
    </source>
</evidence>
<evidence type="ECO:0000255" key="3"/>
<evidence type="ECO:0000256" key="4">
    <source>
        <dbReference type="SAM" id="MobiDB-lite"/>
    </source>
</evidence>
<evidence type="ECO:0000269" key="5">
    <source>
    </source>
</evidence>
<evidence type="ECO:0000303" key="6">
    <source>
    </source>
</evidence>
<evidence type="ECO:0000303" key="7">
    <source>
    </source>
</evidence>
<evidence type="ECO:0000305" key="8"/>
<evidence type="ECO:0007744" key="9">
    <source>
    </source>
</evidence>
<evidence type="ECO:0007744" key="10">
    <source>
    </source>
</evidence>
<feature type="chain" id="PRO_0000274868" description="Denticleless protein homolog">
    <location>
        <begin position="1"/>
        <end position="729"/>
    </location>
</feature>
<feature type="repeat" description="WD 1">
    <location>
        <begin position="47"/>
        <end position="89"/>
    </location>
</feature>
<feature type="repeat" description="WD 2">
    <location>
        <begin position="96"/>
        <end position="135"/>
    </location>
</feature>
<feature type="repeat" description="WD 3">
    <location>
        <begin position="138"/>
        <end position="178"/>
    </location>
</feature>
<feature type="repeat" description="WD 4">
    <location>
        <begin position="214"/>
        <end position="253"/>
    </location>
</feature>
<feature type="repeat" description="WD 5">
    <location>
        <begin position="269"/>
        <end position="308"/>
    </location>
</feature>
<feature type="repeat" description="WD 6">
    <location>
        <begin position="313"/>
        <end position="354"/>
    </location>
</feature>
<feature type="repeat" description="WD 7">
    <location>
        <begin position="358"/>
        <end position="398"/>
    </location>
</feature>
<feature type="region of interest" description="Disordered" evidence="4">
    <location>
        <begin position="189"/>
        <end position="212"/>
    </location>
</feature>
<feature type="region of interest" description="Disordered" evidence="4">
    <location>
        <begin position="416"/>
        <end position="445"/>
    </location>
</feature>
<feature type="region of interest" description="Disordered" evidence="4">
    <location>
        <begin position="460"/>
        <end position="491"/>
    </location>
</feature>
<feature type="region of interest" description="Disordered" evidence="4">
    <location>
        <begin position="504"/>
        <end position="546"/>
    </location>
</feature>
<feature type="region of interest" description="Disordered" evidence="4">
    <location>
        <begin position="596"/>
        <end position="705"/>
    </location>
</feature>
<feature type="short sequence motif" description="DDB1-binding motif" evidence="1">
    <location>
        <begin position="168"/>
        <end position="171"/>
    </location>
</feature>
<feature type="short sequence motif" description="Nuclear localization signal" evidence="3">
    <location>
        <begin position="197"/>
        <end position="203"/>
    </location>
</feature>
<feature type="short sequence motif" description="DDB1-binding motif" evidence="1">
    <location>
        <begin position="243"/>
        <end position="246"/>
    </location>
</feature>
<feature type="compositionally biased region" description="Polar residues" evidence="4">
    <location>
        <begin position="189"/>
        <end position="198"/>
    </location>
</feature>
<feature type="compositionally biased region" description="Low complexity" evidence="4">
    <location>
        <begin position="427"/>
        <end position="445"/>
    </location>
</feature>
<feature type="compositionally biased region" description="Polar residues" evidence="4">
    <location>
        <begin position="460"/>
        <end position="475"/>
    </location>
</feature>
<feature type="compositionally biased region" description="Low complexity" evidence="4">
    <location>
        <begin position="476"/>
        <end position="491"/>
    </location>
</feature>
<feature type="compositionally biased region" description="Polar residues" evidence="4">
    <location>
        <begin position="596"/>
        <end position="607"/>
    </location>
</feature>
<feature type="compositionally biased region" description="Low complexity" evidence="4">
    <location>
        <begin position="630"/>
        <end position="645"/>
    </location>
</feature>
<feature type="compositionally biased region" description="Low complexity" evidence="4">
    <location>
        <begin position="674"/>
        <end position="688"/>
    </location>
</feature>
<feature type="modified residue" description="N-acetylmethionine" evidence="2">
    <location>
        <position position="1"/>
    </location>
</feature>
<feature type="modified residue" description="Phosphothreonine" evidence="2">
    <location>
        <position position="196"/>
    </location>
</feature>
<feature type="modified residue" description="Phosphoserine" evidence="2">
    <location>
        <position position="409"/>
    </location>
</feature>
<feature type="modified residue" description="Phosphoserine" evidence="2">
    <location>
        <position position="425"/>
    </location>
</feature>
<feature type="modified residue" description="Phosphothreonine; by CDK1 and CDK2" evidence="2">
    <location>
        <position position="463"/>
    </location>
</feature>
<feature type="modified residue" description="Phosphoserine" evidence="2">
    <location>
        <position position="484"/>
    </location>
</feature>
<feature type="modified residue" description="Phosphoserine" evidence="2">
    <location>
        <position position="489"/>
    </location>
</feature>
<feature type="modified residue" description="Phosphoserine" evidence="2">
    <location>
        <position position="494"/>
    </location>
</feature>
<feature type="modified residue" description="Phosphoserine" evidence="10">
    <location>
        <position position="511"/>
    </location>
</feature>
<feature type="modified residue" description="Phosphothreonine" evidence="9 10">
    <location>
        <position position="515"/>
    </location>
</feature>
<feature type="modified residue" description="Phosphoserine" evidence="2">
    <location>
        <position position="556"/>
    </location>
</feature>
<feature type="modified residue" description="Phosphoserine" evidence="2">
    <location>
        <position position="675"/>
    </location>
</feature>
<feature type="modified residue" description="Phosphoserine" evidence="2">
    <location>
        <position position="678"/>
    </location>
</feature>
<feature type="modified residue" description="Phosphothreonine" evidence="2">
    <location>
        <position position="683"/>
    </location>
</feature>
<feature type="modified residue" description="Phosphothreonine" evidence="10">
    <location>
        <position position="701"/>
    </location>
</feature>
<feature type="splice variant" id="VSP_022884" description="In isoform 3." evidence="7">
    <original>DSQ</original>
    <variation>VR</variation>
    <location>
        <begin position="214"/>
        <end position="216"/>
    </location>
</feature>
<feature type="splice variant" id="VSP_022885" description="In isoform 3." evidence="7">
    <location>
        <begin position="217"/>
        <end position="729"/>
    </location>
</feature>
<feature type="splice variant" id="VSP_022886" description="In isoform 2." evidence="6">
    <original>TITPSSMRKICTYFRRKTQDDFCSPEHSTEL</original>
    <variation>SLNVGGHMSYLKGTRCSSQDCLGIQANNFALLLH</variation>
    <location>
        <begin position="699"/>
        <end position="729"/>
    </location>
</feature>
<feature type="sequence conflict" description="In Ref. 2; BAE36376." evidence="8" ref="2">
    <original>E</original>
    <variation>G</variation>
    <location>
        <position position="110"/>
    </location>
</feature>
<feature type="sequence conflict" description="In Ref. 2; BAE38725." evidence="8" ref="2">
    <original>P</original>
    <variation>S</variation>
    <location>
        <position position="149"/>
    </location>
</feature>
<feature type="sequence conflict" description="In Ref. 2; BAB28549." evidence="8" ref="2">
    <original>P</original>
    <variation>L</variation>
    <location>
        <position position="200"/>
    </location>
</feature>
<feature type="sequence conflict" description="In Ref. 1; BAC76405/BAC76404." evidence="8" ref="1">
    <original>M</original>
    <variation>T</variation>
    <location>
        <position position="300"/>
    </location>
</feature>
<feature type="sequence conflict" description="In Ref. 1; BAC76405/BAC76404." evidence="8" ref="1">
    <original>C</original>
    <variation>Y</variation>
    <location>
        <position position="369"/>
    </location>
</feature>
<feature type="sequence conflict" description="In Ref. 2; BAE38725." evidence="8" ref="2">
    <original>T</original>
    <variation>A</variation>
    <location>
        <position position="593"/>
    </location>
</feature>
<name>DTL_MOUSE</name>
<comment type="function">
    <text evidence="2">Substrate-specific adapter of a DCX (DDB1-CUL4-X-box) E3 ubiquitin-protein ligase complex required for cell cycle control, DNA damage response and translesion DNA synthesis. The DCX(DTL) complex, also named CRL4(CDT2) complex, mediates the polyubiquitination and subsequent degradation of CDT1, CDKN1A/p21(CIP1), FBH1, KMT5A and SDE2. CDT1 degradation in response to DNA damage is necessary to ensure proper cell cycle regulation of DNA replication. CDKN1A/p21(CIP1) degradation during S phase or following UV irradiation is essential to control replication licensing. KMT5A degradation is also important for a proper regulation of mechanisms such as TGF-beta signaling, cell cycle progression, DNA repair and cell migration. Most substrates require their interaction with PCNA for their polyubiquitination: substrates interact with PCNA via their PIP-box, and those containing the 'K+4' motif in the PIP box, recruit the DCX(DTL) complex, leading to their degradation. In undamaged proliferating cells, the DCX(DTL) complex also promotes the 'Lys-164' monoubiquitination of PCNA, thereby being involved in PCNA-dependent translesion DNA synthesis. The DDB1-CUL4A-DTL E3 ligase complex regulates the circadian clock function by mediating the ubiquitination and degradation of CRY1 (By similarity).</text>
</comment>
<comment type="pathway">
    <text>Protein modification; protein ubiquitination.</text>
</comment>
<comment type="subunit">
    <text evidence="2">Component of the DCX(DTL) E3 ubiquitin ligase complex (also called CRL4(CDT2)), at least composed of CUL4 (CUL4A or CUL4B), DDB1, DTL/CDT2 and RBX1 (By similarity). Interacts with CDKN1A and DDB1 (By similarity). Interacts with FBXO11; SCF(FBXWO11) controls DTL stability but DCX(DTL) does not control FBXO11 stability (By similarity). Interacts with CRY1 (By similarity).</text>
</comment>
<comment type="subcellular location">
    <subcellularLocation>
        <location evidence="2">Nucleus</location>
    </subcellularLocation>
    <subcellularLocation>
        <location evidence="2">Nucleus membrane</location>
        <topology evidence="2">Peripheral membrane protein</topology>
        <orientation evidence="2">Nucleoplasmic side</orientation>
    </subcellularLocation>
    <subcellularLocation>
        <location evidence="2">Cytoplasm</location>
        <location evidence="2">Cytoskeleton</location>
        <location evidence="2">Microtubule organizing center</location>
        <location evidence="2">Centrosome</location>
    </subcellularLocation>
    <subcellularLocation>
        <location evidence="2">Chromosome</location>
    </subcellularLocation>
    <text evidence="2">Nuclear matrix-associated protein. Translocates from the interphase nucleus to the metaphase cytoplasm during mitosis (By similarity).</text>
</comment>
<comment type="alternative products">
    <event type="alternative splicing"/>
    <isoform>
        <id>Q3TLR7-1</id>
        <name>1</name>
        <sequence type="displayed"/>
    </isoform>
    <isoform>
        <id>Q3TLR7-2</id>
        <name>2</name>
        <sequence type="described" ref="VSP_022886"/>
    </isoform>
    <isoform>
        <id>Q3TLR7-4</id>
        <name>3</name>
        <sequence type="described" ref="VSP_022884 VSP_022885"/>
    </isoform>
</comment>
<comment type="PTM">
    <text evidence="2">Ubiquitinated by the anaphase promoting complex/cyclosome (APC/C). Autoubiquitinated through 'Lys-48'-polyubiquitin chains in a PCNA-independent reaction, allowing proteasomal turnover. Polyubiquitinated by SCF(FBXO11) when not phosphorylated, leading to its degradation. A tight regulation of the polyubiquitination by SCF(FBXO11) is involved in the control of different processes such as TGF-beta signaling, cell cycle progression and exit (By similarity).</text>
</comment>
<comment type="PTM">
    <text evidence="2">Phosphorylated at Thr-463 by CDK1/Cyclin B and CDK2/Cycnlin A but not by CDK2/Cyclin E, MAPK1 or PLK1. Phosphorylation at Thr-463 inhibits the interaction with FBXO11 and decreases upon cell cycle exit induced by TGF-beta or serum starvation (By similarity).</text>
</comment>
<comment type="disruption phenotype">
    <text evidence="5">Early embryonic lethality due to cell cycle progression failure, termination of cell division, and, eventually, embryonic death during the preimplantation stage.</text>
</comment>
<comment type="similarity">
    <text evidence="8">Belongs to the WD repeat cdt2 family.</text>
</comment>
<comment type="sequence caution" evidence="8">
    <conflict type="erroneous initiation">
        <sequence resource="EMBL-CDS" id="BAE36376"/>
    </conflict>
    <text>Truncated N-terminus.</text>
</comment>
<comment type="sequence caution" evidence="8">
    <conflict type="frameshift">
        <sequence resource="EMBL" id="BC060208"/>
    </conflict>
</comment>
<reference key="1">
    <citation type="journal article" date="2003" name="J. Immunol.">
        <title>Cryptic CTL epitope on a murine sarcoma Meth A generated by exon extension as a novel mechanism.</title>
        <authorList>
            <person name="Uenaka A."/>
            <person name="Hirano Y."/>
            <person name="Hata H."/>
            <person name="Win S."/>
            <person name="Aji T."/>
            <person name="Tanaka M."/>
            <person name="Ono T."/>
            <person name="Skipper J.C.A."/>
            <person name="Shimizu K."/>
            <person name="Nakayama E."/>
        </authorList>
    </citation>
    <scope>NUCLEOTIDE SEQUENCE [MRNA] (ISOFORMS 1 AND 2)</scope>
    <source>
        <strain>BALB/cJ</strain>
    </source>
</reference>
<reference key="2">
    <citation type="journal article" date="2005" name="Science">
        <title>The transcriptional landscape of the mammalian genome.</title>
        <authorList>
            <person name="Carninci P."/>
            <person name="Kasukawa T."/>
            <person name="Katayama S."/>
            <person name="Gough J."/>
            <person name="Frith M.C."/>
            <person name="Maeda N."/>
            <person name="Oyama R."/>
            <person name="Ravasi T."/>
            <person name="Lenhard B."/>
            <person name="Wells C."/>
            <person name="Kodzius R."/>
            <person name="Shimokawa K."/>
            <person name="Bajic V.B."/>
            <person name="Brenner S.E."/>
            <person name="Batalov S."/>
            <person name="Forrest A.R."/>
            <person name="Zavolan M."/>
            <person name="Davis M.J."/>
            <person name="Wilming L.G."/>
            <person name="Aidinis V."/>
            <person name="Allen J.E."/>
            <person name="Ambesi-Impiombato A."/>
            <person name="Apweiler R."/>
            <person name="Aturaliya R.N."/>
            <person name="Bailey T.L."/>
            <person name="Bansal M."/>
            <person name="Baxter L."/>
            <person name="Beisel K.W."/>
            <person name="Bersano T."/>
            <person name="Bono H."/>
            <person name="Chalk A.M."/>
            <person name="Chiu K.P."/>
            <person name="Choudhary V."/>
            <person name="Christoffels A."/>
            <person name="Clutterbuck D.R."/>
            <person name="Crowe M.L."/>
            <person name="Dalla E."/>
            <person name="Dalrymple B.P."/>
            <person name="de Bono B."/>
            <person name="Della Gatta G."/>
            <person name="di Bernardo D."/>
            <person name="Down T."/>
            <person name="Engstrom P."/>
            <person name="Fagiolini M."/>
            <person name="Faulkner G."/>
            <person name="Fletcher C.F."/>
            <person name="Fukushima T."/>
            <person name="Furuno M."/>
            <person name="Futaki S."/>
            <person name="Gariboldi M."/>
            <person name="Georgii-Hemming P."/>
            <person name="Gingeras T.R."/>
            <person name="Gojobori T."/>
            <person name="Green R.E."/>
            <person name="Gustincich S."/>
            <person name="Harbers M."/>
            <person name="Hayashi Y."/>
            <person name="Hensch T.K."/>
            <person name="Hirokawa N."/>
            <person name="Hill D."/>
            <person name="Huminiecki L."/>
            <person name="Iacono M."/>
            <person name="Ikeo K."/>
            <person name="Iwama A."/>
            <person name="Ishikawa T."/>
            <person name="Jakt M."/>
            <person name="Kanapin A."/>
            <person name="Katoh M."/>
            <person name="Kawasawa Y."/>
            <person name="Kelso J."/>
            <person name="Kitamura H."/>
            <person name="Kitano H."/>
            <person name="Kollias G."/>
            <person name="Krishnan S.P."/>
            <person name="Kruger A."/>
            <person name="Kummerfeld S.K."/>
            <person name="Kurochkin I.V."/>
            <person name="Lareau L.F."/>
            <person name="Lazarevic D."/>
            <person name="Lipovich L."/>
            <person name="Liu J."/>
            <person name="Liuni S."/>
            <person name="McWilliam S."/>
            <person name="Madan Babu M."/>
            <person name="Madera M."/>
            <person name="Marchionni L."/>
            <person name="Matsuda H."/>
            <person name="Matsuzawa S."/>
            <person name="Miki H."/>
            <person name="Mignone F."/>
            <person name="Miyake S."/>
            <person name="Morris K."/>
            <person name="Mottagui-Tabar S."/>
            <person name="Mulder N."/>
            <person name="Nakano N."/>
            <person name="Nakauchi H."/>
            <person name="Ng P."/>
            <person name="Nilsson R."/>
            <person name="Nishiguchi S."/>
            <person name="Nishikawa S."/>
            <person name="Nori F."/>
            <person name="Ohara O."/>
            <person name="Okazaki Y."/>
            <person name="Orlando V."/>
            <person name="Pang K.C."/>
            <person name="Pavan W.J."/>
            <person name="Pavesi G."/>
            <person name="Pesole G."/>
            <person name="Petrovsky N."/>
            <person name="Piazza S."/>
            <person name="Reed J."/>
            <person name="Reid J.F."/>
            <person name="Ring B.Z."/>
            <person name="Ringwald M."/>
            <person name="Rost B."/>
            <person name="Ruan Y."/>
            <person name="Salzberg S.L."/>
            <person name="Sandelin A."/>
            <person name="Schneider C."/>
            <person name="Schoenbach C."/>
            <person name="Sekiguchi K."/>
            <person name="Semple C.A."/>
            <person name="Seno S."/>
            <person name="Sessa L."/>
            <person name="Sheng Y."/>
            <person name="Shibata Y."/>
            <person name="Shimada H."/>
            <person name="Shimada K."/>
            <person name="Silva D."/>
            <person name="Sinclair B."/>
            <person name="Sperling S."/>
            <person name="Stupka E."/>
            <person name="Sugiura K."/>
            <person name="Sultana R."/>
            <person name="Takenaka Y."/>
            <person name="Taki K."/>
            <person name="Tammoja K."/>
            <person name="Tan S.L."/>
            <person name="Tang S."/>
            <person name="Taylor M.S."/>
            <person name="Tegner J."/>
            <person name="Teichmann S.A."/>
            <person name="Ueda H.R."/>
            <person name="van Nimwegen E."/>
            <person name="Verardo R."/>
            <person name="Wei C.L."/>
            <person name="Yagi K."/>
            <person name="Yamanishi H."/>
            <person name="Zabarovsky E."/>
            <person name="Zhu S."/>
            <person name="Zimmer A."/>
            <person name="Hide W."/>
            <person name="Bult C."/>
            <person name="Grimmond S.M."/>
            <person name="Teasdale R.D."/>
            <person name="Liu E.T."/>
            <person name="Brusic V."/>
            <person name="Quackenbush J."/>
            <person name="Wahlestedt C."/>
            <person name="Mattick J.S."/>
            <person name="Hume D.A."/>
            <person name="Kai C."/>
            <person name="Sasaki D."/>
            <person name="Tomaru Y."/>
            <person name="Fukuda S."/>
            <person name="Kanamori-Katayama M."/>
            <person name="Suzuki M."/>
            <person name="Aoki J."/>
            <person name="Arakawa T."/>
            <person name="Iida J."/>
            <person name="Imamura K."/>
            <person name="Itoh M."/>
            <person name="Kato T."/>
            <person name="Kawaji H."/>
            <person name="Kawagashira N."/>
            <person name="Kawashima T."/>
            <person name="Kojima M."/>
            <person name="Kondo S."/>
            <person name="Konno H."/>
            <person name="Nakano K."/>
            <person name="Ninomiya N."/>
            <person name="Nishio T."/>
            <person name="Okada M."/>
            <person name="Plessy C."/>
            <person name="Shibata K."/>
            <person name="Shiraki T."/>
            <person name="Suzuki S."/>
            <person name="Tagami M."/>
            <person name="Waki K."/>
            <person name="Watahiki A."/>
            <person name="Okamura-Oho Y."/>
            <person name="Suzuki H."/>
            <person name="Kawai J."/>
            <person name="Hayashizaki Y."/>
        </authorList>
    </citation>
    <scope>NUCLEOTIDE SEQUENCE [LARGE SCALE MRNA] (ISOFORMS 1 AND 3)</scope>
    <source>
        <strain>C57BL/6J</strain>
        <tissue>Embryo</tissue>
        <tissue>Mammary gland</tissue>
        <tissue>Ovary</tissue>
        <tissue>Testis</tissue>
    </source>
</reference>
<reference key="3">
    <citation type="journal article" date="2004" name="Genome Res.">
        <title>The status, quality, and expansion of the NIH full-length cDNA project: the Mammalian Gene Collection (MGC).</title>
        <authorList>
            <consortium name="The MGC Project Team"/>
        </authorList>
    </citation>
    <scope>NUCLEOTIDE SEQUENCE [LARGE SCALE MRNA] (ISOFORM 1)</scope>
    <source>
        <strain>C57BL/6J</strain>
        <tissue>Brain</tissue>
    </source>
</reference>
<reference key="4">
    <citation type="journal article" date="2007" name="J. Biol. Chem.">
        <title>L2dtl is essential for cell survival and nuclear division in early mouse embryonic development.</title>
        <authorList>
            <person name="Liu C.L."/>
            <person name="Yu I.S."/>
            <person name="Pan H.W."/>
            <person name="Lin S.W."/>
            <person name="Hsu H.C."/>
        </authorList>
    </citation>
    <scope>DISRUPTION PHENOTYPE</scope>
</reference>
<reference key="5">
    <citation type="journal article" date="2007" name="Proc. Natl. Acad. Sci. U.S.A.">
        <title>Large-scale phosphorylation analysis of mouse liver.</title>
        <authorList>
            <person name="Villen J."/>
            <person name="Beausoleil S.A."/>
            <person name="Gerber S.A."/>
            <person name="Gygi S.P."/>
        </authorList>
    </citation>
    <scope>PHOSPHORYLATION [LARGE SCALE ANALYSIS] AT THR-515</scope>
    <scope>IDENTIFICATION BY MASS SPECTROMETRY [LARGE SCALE ANALYSIS]</scope>
    <source>
        <tissue>Liver</tissue>
    </source>
</reference>
<reference key="6">
    <citation type="journal article" date="2010" name="Cell">
        <title>A tissue-specific atlas of mouse protein phosphorylation and expression.</title>
        <authorList>
            <person name="Huttlin E.L."/>
            <person name="Jedrychowski M.P."/>
            <person name="Elias J.E."/>
            <person name="Goswami T."/>
            <person name="Rad R."/>
            <person name="Beausoleil S.A."/>
            <person name="Villen J."/>
            <person name="Haas W."/>
            <person name="Sowa M.E."/>
            <person name="Gygi S.P."/>
        </authorList>
    </citation>
    <scope>PHOSPHORYLATION [LARGE SCALE ANALYSIS] AT SER-511; THR-515 AND THR-701</scope>
    <scope>IDENTIFICATION BY MASS SPECTROMETRY [LARGE SCALE ANALYSIS]</scope>
    <source>
        <tissue>Lung</tissue>
        <tissue>Spleen</tissue>
        <tissue>Testis</tissue>
    </source>
</reference>
<proteinExistence type="evidence at protein level"/>
<protein>
    <recommendedName>
        <fullName>Denticleless protein homolog</fullName>
    </recommendedName>
    <alternativeName>
        <fullName>Lethal(2) denticleless protein homolog</fullName>
    </alternativeName>
    <alternativeName>
        <fullName>Meth A retinoic acid-regulated nuclear matrix-associated protein</fullName>
        <shortName>Meth A RAMP</shortName>
    </alternativeName>
    <alternativeName>
        <fullName>Retinoic acid-regulated nuclear matrix-associated protein</fullName>
    </alternativeName>
</protein>
<keyword id="KW-0007">Acetylation</keyword>
<keyword id="KW-0025">Alternative splicing</keyword>
<keyword id="KW-0090">Biological rhythms</keyword>
<keyword id="KW-0158">Chromosome</keyword>
<keyword id="KW-0963">Cytoplasm</keyword>
<keyword id="KW-0206">Cytoskeleton</keyword>
<keyword id="KW-0227">DNA damage</keyword>
<keyword id="KW-0235">DNA replication</keyword>
<keyword id="KW-0472">Membrane</keyword>
<keyword id="KW-0539">Nucleus</keyword>
<keyword id="KW-0597">Phosphoprotein</keyword>
<keyword id="KW-1185">Reference proteome</keyword>
<keyword id="KW-0677">Repeat</keyword>
<keyword id="KW-0832">Ubl conjugation</keyword>
<keyword id="KW-0833">Ubl conjugation pathway</keyword>
<keyword id="KW-0853">WD repeat</keyword>
<accession>Q3TLR7</accession>
<accession>Q3TTE9</accession>
<accession>Q6PAN1</accession>
<accession>Q80WY1</accession>
<accession>Q80WY2</accession>
<accession>Q8BW38</accession>
<accession>Q9CZ76</accession>
<organism>
    <name type="scientific">Mus musculus</name>
    <name type="common">Mouse</name>
    <dbReference type="NCBI Taxonomy" id="10090"/>
    <lineage>
        <taxon>Eukaryota</taxon>
        <taxon>Metazoa</taxon>
        <taxon>Chordata</taxon>
        <taxon>Craniata</taxon>
        <taxon>Vertebrata</taxon>
        <taxon>Euteleostomi</taxon>
        <taxon>Mammalia</taxon>
        <taxon>Eutheria</taxon>
        <taxon>Euarchontoglires</taxon>
        <taxon>Glires</taxon>
        <taxon>Rodentia</taxon>
        <taxon>Myomorpha</taxon>
        <taxon>Muroidea</taxon>
        <taxon>Muridae</taxon>
        <taxon>Murinae</taxon>
        <taxon>Mus</taxon>
        <taxon>Mus</taxon>
    </lineage>
</organism>
<sequence>MLFNSVLRQPQLGVLRNGWSSHYPLQSLLSGYQCNCNDEHTSYGETGVPVPPFGCTFCTAPSMEHILAVANEEGFVRLYNTESQTSKKTCFKEWMAHWNAVFDLAWVPGELKLVTAAGDQTAKFWDVRAGELMGTCKGHQCSLKSVAFPKFQKAVFSTGGRDGNIMIWDTRCNKKDGFYRQVNQISGAHNTADKQTPSKPKKKQNSKGLAPAVDSQQSVTVVLFQDENTLVSAGAVDGIIKVWDLRKNYTAYRQEPIASKSFLYPGTSTRKLGYSSLVLDSTGSTLFANCTDDNIYMFNMTGLKTSPVAVFNGHQNSTFYVKSSLSPDDQFLISGSSDEAAYIWKVSMPWHPPTVLLGHSQEVTSVCWCPSDFTKIATCSDDNTLKIWRLNRGLEEKPGDKHSIVGWTSQKKKEVKACPVTVPSSQSTPAKAPRAKSSPSISSPSSAACTPSCAGDLPLPSSTPTFSVKTTPATTRSSVSRRGSISSVSPKPLSSFKMSLRNWVTRTPSSSPPVTPPASETKISSPRKALIPVSQKSSQADACSESRNRVKRRLDSSCLESVKQKCVKSCNCVTELDGQAESLRLDLCCLSGTQEVLSQDSEGPTKSSKTEGAGTSISEPPSPVSPYASEGCGPLPLPLRPCGEGSEMVGKENSSPENKNWLLAIAAKRKAENSSPRSPSSQTPSSRRQSGKTSPGPVTITPSSMRKICTYFRRKTQDDFCSPEHSTEL</sequence>
<dbReference type="EMBL" id="AB095735">
    <property type="protein sequence ID" value="BAC76404.1"/>
    <property type="molecule type" value="mRNA"/>
</dbReference>
<dbReference type="EMBL" id="AB095736">
    <property type="protein sequence ID" value="BAC76405.1"/>
    <property type="molecule type" value="mRNA"/>
</dbReference>
<dbReference type="EMBL" id="AK012919">
    <property type="protein sequence ID" value="BAB28549.1"/>
    <property type="molecule type" value="mRNA"/>
</dbReference>
<dbReference type="EMBL" id="AK054412">
    <property type="protein sequence ID" value="BAC35769.1"/>
    <property type="molecule type" value="mRNA"/>
</dbReference>
<dbReference type="EMBL" id="AK133177">
    <property type="protein sequence ID" value="BAE21543.1"/>
    <property type="molecule type" value="mRNA"/>
</dbReference>
<dbReference type="EMBL" id="AK161401">
    <property type="protein sequence ID" value="BAE36376.1"/>
    <property type="status" value="ALT_INIT"/>
    <property type="molecule type" value="mRNA"/>
</dbReference>
<dbReference type="EMBL" id="AK166351">
    <property type="protein sequence ID" value="BAE38725.1"/>
    <property type="molecule type" value="mRNA"/>
</dbReference>
<dbReference type="EMBL" id="BC060208">
    <property type="status" value="NOT_ANNOTATED_CDS"/>
    <property type="molecule type" value="mRNA"/>
</dbReference>
<dbReference type="CCDS" id="CCDS15621.1">
    <molecule id="Q3TLR7-1"/>
</dbReference>
<dbReference type="RefSeq" id="NP_001292162.1">
    <property type="nucleotide sequence ID" value="NM_001305233.1"/>
</dbReference>
<dbReference type="RefSeq" id="NP_084042.1">
    <molecule id="Q3TLR7-1"/>
    <property type="nucleotide sequence ID" value="NM_029766.3"/>
</dbReference>
<dbReference type="SMR" id="Q3TLR7"/>
<dbReference type="BioGRID" id="218345">
    <property type="interactions" value="33"/>
</dbReference>
<dbReference type="FunCoup" id="Q3TLR7">
    <property type="interactions" value="818"/>
</dbReference>
<dbReference type="IntAct" id="Q3TLR7">
    <property type="interactions" value="31"/>
</dbReference>
<dbReference type="STRING" id="10090.ENSMUSP00000027933"/>
<dbReference type="GlyGen" id="Q3TLR7">
    <property type="glycosylation" value="3 sites"/>
</dbReference>
<dbReference type="iPTMnet" id="Q3TLR7"/>
<dbReference type="PhosphoSitePlus" id="Q3TLR7"/>
<dbReference type="jPOST" id="Q3TLR7"/>
<dbReference type="PaxDb" id="10090-ENSMUSP00000027933"/>
<dbReference type="PeptideAtlas" id="Q3TLR7"/>
<dbReference type="ProteomicsDB" id="277629">
    <molecule id="Q3TLR7-1"/>
</dbReference>
<dbReference type="ProteomicsDB" id="277630">
    <molecule id="Q3TLR7-2"/>
</dbReference>
<dbReference type="ProteomicsDB" id="277631">
    <molecule id="Q3TLR7-4"/>
</dbReference>
<dbReference type="Pumba" id="Q3TLR7"/>
<dbReference type="Antibodypedia" id="34605">
    <property type="antibodies" value="225 antibodies from 30 providers"/>
</dbReference>
<dbReference type="Ensembl" id="ENSMUST00000027933.11">
    <molecule id="Q3TLR7-1"/>
    <property type="protein sequence ID" value="ENSMUSP00000027933.6"/>
    <property type="gene ID" value="ENSMUSG00000037474.14"/>
</dbReference>
<dbReference type="GeneID" id="76843"/>
<dbReference type="KEGG" id="mmu:76843"/>
<dbReference type="UCSC" id="uc007eck.2">
    <molecule id="Q3TLR7-1"/>
    <property type="organism name" value="mouse"/>
</dbReference>
<dbReference type="UCSC" id="uc007ecn.2">
    <molecule id="Q3TLR7-4"/>
    <property type="organism name" value="mouse"/>
</dbReference>
<dbReference type="AGR" id="MGI:1924093"/>
<dbReference type="CTD" id="51514"/>
<dbReference type="MGI" id="MGI:1924093">
    <property type="gene designation" value="Dtl"/>
</dbReference>
<dbReference type="VEuPathDB" id="HostDB:ENSMUSG00000037474"/>
<dbReference type="eggNOG" id="KOG0321">
    <property type="taxonomic scope" value="Eukaryota"/>
</dbReference>
<dbReference type="GeneTree" id="ENSGT00530000064210"/>
<dbReference type="HOGENOM" id="CLU_023407_0_0_1"/>
<dbReference type="InParanoid" id="Q3TLR7"/>
<dbReference type="OMA" id="PHSQFEK"/>
<dbReference type="OrthoDB" id="2096344at2759"/>
<dbReference type="PhylomeDB" id="Q3TLR7"/>
<dbReference type="TreeFam" id="TF324483"/>
<dbReference type="Reactome" id="R-MMU-110314">
    <property type="pathway name" value="Recognition of DNA damage by PCNA-containing replication complex"/>
</dbReference>
<dbReference type="Reactome" id="R-MMU-8951664">
    <property type="pathway name" value="Neddylation"/>
</dbReference>
<dbReference type="UniPathway" id="UPA00143"/>
<dbReference type="BioGRID-ORCS" id="76843">
    <property type="hits" value="27 hits in 99 CRISPR screens"/>
</dbReference>
<dbReference type="ChiTaRS" id="Dtl">
    <property type="organism name" value="mouse"/>
</dbReference>
<dbReference type="PRO" id="PR:Q3TLR7"/>
<dbReference type="Proteomes" id="UP000000589">
    <property type="component" value="Chromosome 1"/>
</dbReference>
<dbReference type="RNAct" id="Q3TLR7">
    <property type="molecule type" value="protein"/>
</dbReference>
<dbReference type="Bgee" id="ENSMUSG00000037474">
    <property type="expression patterns" value="Expressed in metanephric mesenchyme and 178 other cell types or tissues"/>
</dbReference>
<dbReference type="ExpressionAtlas" id="Q3TLR7">
    <property type="expression patterns" value="baseline and differential"/>
</dbReference>
<dbReference type="GO" id="GO:0005813">
    <property type="term" value="C:centrosome"/>
    <property type="evidence" value="ECO:0000250"/>
    <property type="project" value="UniProtKB"/>
</dbReference>
<dbReference type="GO" id="GO:0005694">
    <property type="term" value="C:chromosome"/>
    <property type="evidence" value="ECO:0007669"/>
    <property type="project" value="UniProtKB-SubCell"/>
</dbReference>
<dbReference type="GO" id="GO:0031464">
    <property type="term" value="C:Cul4A-RING E3 ubiquitin ligase complex"/>
    <property type="evidence" value="ECO:0000250"/>
    <property type="project" value="UniProtKB"/>
</dbReference>
<dbReference type="GO" id="GO:0031465">
    <property type="term" value="C:Cul4B-RING E3 ubiquitin ligase complex"/>
    <property type="evidence" value="ECO:0000250"/>
    <property type="project" value="UniProtKB"/>
</dbReference>
<dbReference type="GO" id="GO:0005829">
    <property type="term" value="C:cytosol"/>
    <property type="evidence" value="ECO:0007669"/>
    <property type="project" value="Ensembl"/>
</dbReference>
<dbReference type="GO" id="GO:0031965">
    <property type="term" value="C:nuclear membrane"/>
    <property type="evidence" value="ECO:0007669"/>
    <property type="project" value="UniProtKB-SubCell"/>
</dbReference>
<dbReference type="GO" id="GO:0005730">
    <property type="term" value="C:nucleolus"/>
    <property type="evidence" value="ECO:0007669"/>
    <property type="project" value="Ensembl"/>
</dbReference>
<dbReference type="GO" id="GO:0005654">
    <property type="term" value="C:nucleoplasm"/>
    <property type="evidence" value="ECO:0007669"/>
    <property type="project" value="Ensembl"/>
</dbReference>
<dbReference type="GO" id="GO:0005634">
    <property type="term" value="C:nucleus"/>
    <property type="evidence" value="ECO:0000250"/>
    <property type="project" value="UniProtKB"/>
</dbReference>
<dbReference type="GO" id="GO:0004842">
    <property type="term" value="F:ubiquitin-protein transferase activity"/>
    <property type="evidence" value="ECO:0007669"/>
    <property type="project" value="Ensembl"/>
</dbReference>
<dbReference type="GO" id="GO:0006974">
    <property type="term" value="P:DNA damage response"/>
    <property type="evidence" value="ECO:0000250"/>
    <property type="project" value="UniProtKB"/>
</dbReference>
<dbReference type="GO" id="GO:0006260">
    <property type="term" value="P:DNA replication"/>
    <property type="evidence" value="ECO:0007669"/>
    <property type="project" value="UniProtKB-KW"/>
</dbReference>
<dbReference type="GO" id="GO:0007095">
    <property type="term" value="P:mitotic G2 DNA damage checkpoint signaling"/>
    <property type="evidence" value="ECO:0000250"/>
    <property type="project" value="UniProtKB"/>
</dbReference>
<dbReference type="GO" id="GO:0010971">
    <property type="term" value="P:positive regulation of G2/M transition of mitotic cell cycle"/>
    <property type="evidence" value="ECO:0007669"/>
    <property type="project" value="Ensembl"/>
</dbReference>
<dbReference type="GO" id="GO:0045732">
    <property type="term" value="P:positive regulation of protein catabolic process"/>
    <property type="evidence" value="ECO:0007669"/>
    <property type="project" value="Ensembl"/>
</dbReference>
<dbReference type="GO" id="GO:0006513">
    <property type="term" value="P:protein monoubiquitination"/>
    <property type="evidence" value="ECO:0000250"/>
    <property type="project" value="UniProtKB"/>
</dbReference>
<dbReference type="GO" id="GO:0000209">
    <property type="term" value="P:protein polyubiquitination"/>
    <property type="evidence" value="ECO:0000250"/>
    <property type="project" value="UniProtKB"/>
</dbReference>
<dbReference type="GO" id="GO:0051726">
    <property type="term" value="P:regulation of cell cycle"/>
    <property type="evidence" value="ECO:0000250"/>
    <property type="project" value="UniProtKB"/>
</dbReference>
<dbReference type="GO" id="GO:0009411">
    <property type="term" value="P:response to UV"/>
    <property type="evidence" value="ECO:0000250"/>
    <property type="project" value="UniProtKB"/>
</dbReference>
<dbReference type="GO" id="GO:0048511">
    <property type="term" value="P:rhythmic process"/>
    <property type="evidence" value="ECO:0007669"/>
    <property type="project" value="UniProtKB-KW"/>
</dbReference>
<dbReference type="GO" id="GO:0019985">
    <property type="term" value="P:translesion synthesis"/>
    <property type="evidence" value="ECO:0000250"/>
    <property type="project" value="UniProtKB"/>
</dbReference>
<dbReference type="GO" id="GO:0006511">
    <property type="term" value="P:ubiquitin-dependent protein catabolic process"/>
    <property type="evidence" value="ECO:0000250"/>
    <property type="project" value="UniProtKB"/>
</dbReference>
<dbReference type="FunFam" id="2.130.10.10:FF:000447">
    <property type="entry name" value="Denticleless protein homolog B"/>
    <property type="match status" value="1"/>
</dbReference>
<dbReference type="FunFam" id="2.130.10.10:FF:000171">
    <property type="entry name" value="denticleless protein homolog isoform X1"/>
    <property type="match status" value="1"/>
</dbReference>
<dbReference type="Gene3D" id="2.130.10.10">
    <property type="entry name" value="YVTN repeat-like/Quinoprotein amine dehydrogenase"/>
    <property type="match status" value="2"/>
</dbReference>
<dbReference type="InterPro" id="IPR051865">
    <property type="entry name" value="WD-repeat_CDT2_adapter"/>
</dbReference>
<dbReference type="InterPro" id="IPR015943">
    <property type="entry name" value="WD40/YVTN_repeat-like_dom_sf"/>
</dbReference>
<dbReference type="InterPro" id="IPR019775">
    <property type="entry name" value="WD40_repeat_CS"/>
</dbReference>
<dbReference type="InterPro" id="IPR036322">
    <property type="entry name" value="WD40_repeat_dom_sf"/>
</dbReference>
<dbReference type="InterPro" id="IPR001680">
    <property type="entry name" value="WD40_rpt"/>
</dbReference>
<dbReference type="PANTHER" id="PTHR22852:SF0">
    <property type="entry name" value="DENTICLELESS PROTEIN HOMOLOG"/>
    <property type="match status" value="1"/>
</dbReference>
<dbReference type="PANTHER" id="PTHR22852">
    <property type="entry name" value="LETHAL 2 DENTICLELESS PROTEIN RETINOIC ACID-REGULATED NUCLEAR MATRIX-ASSOCIATED PROTEIN"/>
    <property type="match status" value="1"/>
</dbReference>
<dbReference type="Pfam" id="PF00400">
    <property type="entry name" value="WD40"/>
    <property type="match status" value="5"/>
</dbReference>
<dbReference type="SMART" id="SM00320">
    <property type="entry name" value="WD40"/>
    <property type="match status" value="5"/>
</dbReference>
<dbReference type="SUPFAM" id="SSF50978">
    <property type="entry name" value="WD40 repeat-like"/>
    <property type="match status" value="1"/>
</dbReference>
<dbReference type="PROSITE" id="PS00678">
    <property type="entry name" value="WD_REPEATS_1"/>
    <property type="match status" value="2"/>
</dbReference>
<dbReference type="PROSITE" id="PS50082">
    <property type="entry name" value="WD_REPEATS_2"/>
    <property type="match status" value="5"/>
</dbReference>
<dbReference type="PROSITE" id="PS50294">
    <property type="entry name" value="WD_REPEATS_REGION"/>
    <property type="match status" value="1"/>
</dbReference>
<gene>
    <name type="primary">Dtl</name>
    <name type="synonym">Cdt2</name>
    <name type="synonym">L2dtl</name>
    <name type="synonym">Ramp</name>
</gene>